<evidence type="ECO:0000255" key="1">
    <source>
        <dbReference type="HAMAP-Rule" id="MF_00046"/>
    </source>
</evidence>
<reference key="1">
    <citation type="journal article" date="2016" name="Genome Announc.">
        <title>Complete genome sequence of Alkaliphilus metalliredigens strain QYMF, an alkaliphilic and metal-reducing bacterium isolated from borax-contaminated leachate ponds.</title>
        <authorList>
            <person name="Hwang C."/>
            <person name="Copeland A."/>
            <person name="Lucas S."/>
            <person name="Lapidus A."/>
            <person name="Barry K."/>
            <person name="Detter J.C."/>
            <person name="Glavina Del Rio T."/>
            <person name="Hammon N."/>
            <person name="Israni S."/>
            <person name="Dalin E."/>
            <person name="Tice H."/>
            <person name="Pitluck S."/>
            <person name="Chertkov O."/>
            <person name="Brettin T."/>
            <person name="Bruce D."/>
            <person name="Han C."/>
            <person name="Schmutz J."/>
            <person name="Larimer F."/>
            <person name="Land M.L."/>
            <person name="Hauser L."/>
            <person name="Kyrpides N."/>
            <person name="Mikhailova N."/>
            <person name="Ye Q."/>
            <person name="Zhou J."/>
            <person name="Richardson P."/>
            <person name="Fields M.W."/>
        </authorList>
    </citation>
    <scope>NUCLEOTIDE SEQUENCE [LARGE SCALE GENOMIC DNA]</scope>
    <source>
        <strain>QYMF</strain>
    </source>
</reference>
<comment type="function">
    <text evidence="1">Cell wall formation.</text>
</comment>
<comment type="catalytic activity">
    <reaction evidence="1">
        <text>UDP-N-acetyl-alpha-D-muramate + L-alanine + ATP = UDP-N-acetyl-alpha-D-muramoyl-L-alanine + ADP + phosphate + H(+)</text>
        <dbReference type="Rhea" id="RHEA:23372"/>
        <dbReference type="ChEBI" id="CHEBI:15378"/>
        <dbReference type="ChEBI" id="CHEBI:30616"/>
        <dbReference type="ChEBI" id="CHEBI:43474"/>
        <dbReference type="ChEBI" id="CHEBI:57972"/>
        <dbReference type="ChEBI" id="CHEBI:70757"/>
        <dbReference type="ChEBI" id="CHEBI:83898"/>
        <dbReference type="ChEBI" id="CHEBI:456216"/>
        <dbReference type="EC" id="6.3.2.8"/>
    </reaction>
</comment>
<comment type="pathway">
    <text evidence="1">Cell wall biogenesis; peptidoglycan biosynthesis.</text>
</comment>
<comment type="subcellular location">
    <subcellularLocation>
        <location evidence="1">Cytoplasm</location>
    </subcellularLocation>
</comment>
<comment type="similarity">
    <text evidence="1">Belongs to the MurCDEF family.</text>
</comment>
<protein>
    <recommendedName>
        <fullName evidence="1">UDP-N-acetylmuramate--L-alanine ligase</fullName>
        <ecNumber evidence="1">6.3.2.8</ecNumber>
    </recommendedName>
    <alternativeName>
        <fullName evidence="1">UDP-N-acetylmuramoyl-L-alanine synthetase</fullName>
    </alternativeName>
</protein>
<sequence length="460" mass="51464">MIAFNMDEHQLKHIHLIGIGGISMSAIAEILLENGYHISGSDMKESNLTHKLRDHGAEIFIGHASENIQNPDLVVYTAAVKADNPERIRAEELGIPLADRAEMLGQIMKKYEKAIAVAGSHGKTTTTSLISLLMEYSNLDPTILVGGELDEIGGNIKIGQSQHFITEACEYVESFLKFYPFIGIILNIDEDHLDYFKDIEHIKSAFKKFAQRIPKEGFLIASYDDAHVREISRDLDCHVITYGIKTKSQFMAHNIEFSFEGLPSFDVSFEGKTIGSFSLNIPGLHNVYNSLAAIATTYVLGVDPVAISKHITRFKGIHRRFDLLGEVKGAKVIDDYAHHPVEIRATLEAAKKYPHKKIWCVFQPHTYSRTQALLKDFAKSFYLADHVIITDIYAAREKDEGIVNSQGLVNLIVQEHPAQYIGGFEEISRYLYDHIEAGDIVLTMGAGDVYLIAQMLLAEK</sequence>
<feature type="chain" id="PRO_0000336810" description="UDP-N-acetylmuramate--L-alanine ligase">
    <location>
        <begin position="1"/>
        <end position="460"/>
    </location>
</feature>
<feature type="binding site" evidence="1">
    <location>
        <begin position="119"/>
        <end position="125"/>
    </location>
    <ligand>
        <name>ATP</name>
        <dbReference type="ChEBI" id="CHEBI:30616"/>
    </ligand>
</feature>
<accession>A6TJM2</accession>
<proteinExistence type="inferred from homology"/>
<organism>
    <name type="scientific">Alkaliphilus metalliredigens (strain QYMF)</name>
    <dbReference type="NCBI Taxonomy" id="293826"/>
    <lineage>
        <taxon>Bacteria</taxon>
        <taxon>Bacillati</taxon>
        <taxon>Bacillota</taxon>
        <taxon>Clostridia</taxon>
        <taxon>Peptostreptococcales</taxon>
        <taxon>Natronincolaceae</taxon>
        <taxon>Alkaliphilus</taxon>
    </lineage>
</organism>
<gene>
    <name evidence="1" type="primary">murC</name>
    <name type="ordered locus">Amet_0153</name>
</gene>
<keyword id="KW-0067">ATP-binding</keyword>
<keyword id="KW-0131">Cell cycle</keyword>
<keyword id="KW-0132">Cell division</keyword>
<keyword id="KW-0133">Cell shape</keyword>
<keyword id="KW-0961">Cell wall biogenesis/degradation</keyword>
<keyword id="KW-0963">Cytoplasm</keyword>
<keyword id="KW-0436">Ligase</keyword>
<keyword id="KW-0547">Nucleotide-binding</keyword>
<keyword id="KW-0573">Peptidoglycan synthesis</keyword>
<keyword id="KW-1185">Reference proteome</keyword>
<name>MURC_ALKMQ</name>
<dbReference type="EC" id="6.3.2.8" evidence="1"/>
<dbReference type="EMBL" id="CP000724">
    <property type="protein sequence ID" value="ABR46390.1"/>
    <property type="molecule type" value="Genomic_DNA"/>
</dbReference>
<dbReference type="RefSeq" id="WP_011971299.1">
    <property type="nucleotide sequence ID" value="NC_009633.1"/>
</dbReference>
<dbReference type="SMR" id="A6TJM2"/>
<dbReference type="STRING" id="293826.Amet_0153"/>
<dbReference type="KEGG" id="amt:Amet_0153"/>
<dbReference type="eggNOG" id="COG0773">
    <property type="taxonomic scope" value="Bacteria"/>
</dbReference>
<dbReference type="HOGENOM" id="CLU_028104_1_0_9"/>
<dbReference type="OrthoDB" id="9804126at2"/>
<dbReference type="UniPathway" id="UPA00219"/>
<dbReference type="Proteomes" id="UP000001572">
    <property type="component" value="Chromosome"/>
</dbReference>
<dbReference type="GO" id="GO:0005737">
    <property type="term" value="C:cytoplasm"/>
    <property type="evidence" value="ECO:0007669"/>
    <property type="project" value="UniProtKB-SubCell"/>
</dbReference>
<dbReference type="GO" id="GO:0005524">
    <property type="term" value="F:ATP binding"/>
    <property type="evidence" value="ECO:0007669"/>
    <property type="project" value="UniProtKB-UniRule"/>
</dbReference>
<dbReference type="GO" id="GO:0008763">
    <property type="term" value="F:UDP-N-acetylmuramate-L-alanine ligase activity"/>
    <property type="evidence" value="ECO:0007669"/>
    <property type="project" value="UniProtKB-UniRule"/>
</dbReference>
<dbReference type="GO" id="GO:0051301">
    <property type="term" value="P:cell division"/>
    <property type="evidence" value="ECO:0007669"/>
    <property type="project" value="UniProtKB-KW"/>
</dbReference>
<dbReference type="GO" id="GO:0071555">
    <property type="term" value="P:cell wall organization"/>
    <property type="evidence" value="ECO:0007669"/>
    <property type="project" value="UniProtKB-KW"/>
</dbReference>
<dbReference type="GO" id="GO:0009252">
    <property type="term" value="P:peptidoglycan biosynthetic process"/>
    <property type="evidence" value="ECO:0007669"/>
    <property type="project" value="UniProtKB-UniRule"/>
</dbReference>
<dbReference type="GO" id="GO:0008360">
    <property type="term" value="P:regulation of cell shape"/>
    <property type="evidence" value="ECO:0007669"/>
    <property type="project" value="UniProtKB-KW"/>
</dbReference>
<dbReference type="Gene3D" id="3.90.190.20">
    <property type="entry name" value="Mur ligase, C-terminal domain"/>
    <property type="match status" value="1"/>
</dbReference>
<dbReference type="Gene3D" id="3.40.1190.10">
    <property type="entry name" value="Mur-like, catalytic domain"/>
    <property type="match status" value="1"/>
</dbReference>
<dbReference type="Gene3D" id="3.40.50.720">
    <property type="entry name" value="NAD(P)-binding Rossmann-like Domain"/>
    <property type="match status" value="1"/>
</dbReference>
<dbReference type="HAMAP" id="MF_00046">
    <property type="entry name" value="MurC"/>
    <property type="match status" value="1"/>
</dbReference>
<dbReference type="InterPro" id="IPR036565">
    <property type="entry name" value="Mur-like_cat_sf"/>
</dbReference>
<dbReference type="InterPro" id="IPR004101">
    <property type="entry name" value="Mur_ligase_C"/>
</dbReference>
<dbReference type="InterPro" id="IPR036615">
    <property type="entry name" value="Mur_ligase_C_dom_sf"/>
</dbReference>
<dbReference type="InterPro" id="IPR013221">
    <property type="entry name" value="Mur_ligase_cen"/>
</dbReference>
<dbReference type="InterPro" id="IPR000713">
    <property type="entry name" value="Mur_ligase_N"/>
</dbReference>
<dbReference type="InterPro" id="IPR050061">
    <property type="entry name" value="MurCDEF_pg_biosynth"/>
</dbReference>
<dbReference type="InterPro" id="IPR005758">
    <property type="entry name" value="UDP-N-AcMur_Ala_ligase_MurC"/>
</dbReference>
<dbReference type="NCBIfam" id="TIGR01082">
    <property type="entry name" value="murC"/>
    <property type="match status" value="1"/>
</dbReference>
<dbReference type="PANTHER" id="PTHR43445:SF3">
    <property type="entry name" value="UDP-N-ACETYLMURAMATE--L-ALANINE LIGASE"/>
    <property type="match status" value="1"/>
</dbReference>
<dbReference type="PANTHER" id="PTHR43445">
    <property type="entry name" value="UDP-N-ACETYLMURAMATE--L-ALANINE LIGASE-RELATED"/>
    <property type="match status" value="1"/>
</dbReference>
<dbReference type="Pfam" id="PF01225">
    <property type="entry name" value="Mur_ligase"/>
    <property type="match status" value="1"/>
</dbReference>
<dbReference type="Pfam" id="PF02875">
    <property type="entry name" value="Mur_ligase_C"/>
    <property type="match status" value="1"/>
</dbReference>
<dbReference type="Pfam" id="PF08245">
    <property type="entry name" value="Mur_ligase_M"/>
    <property type="match status" value="1"/>
</dbReference>
<dbReference type="SUPFAM" id="SSF51984">
    <property type="entry name" value="MurCD N-terminal domain"/>
    <property type="match status" value="1"/>
</dbReference>
<dbReference type="SUPFAM" id="SSF53623">
    <property type="entry name" value="MurD-like peptide ligases, catalytic domain"/>
    <property type="match status" value="1"/>
</dbReference>
<dbReference type="SUPFAM" id="SSF53244">
    <property type="entry name" value="MurD-like peptide ligases, peptide-binding domain"/>
    <property type="match status" value="1"/>
</dbReference>